<sequence length="209" mass="22244">MIGLVGKKVGMTRIFTEDGVSIPVTVIEVEANRVTQVKDLANDGYRAIQVTTGAKKANRVTKPEAGHFAKAGVEAGRGLWEFRLAEGEEFTVGQSISVELFADVKKVDVTGTSKGKGFAGTVKRWNFRTQDATHGNSLSHRVPGSIGQNQTPGKVFKGKKMAGQMGNERVTVQSLDVVRVDAERNLLLVKGAVPGATGSDLIVKPAVKA</sequence>
<protein>
    <recommendedName>
        <fullName evidence="1">Large ribosomal subunit protein uL3</fullName>
    </recommendedName>
    <alternativeName>
        <fullName evidence="2">50S ribosomal protein L3</fullName>
    </alternativeName>
</protein>
<accession>P60447</accession>
<accession>P02386</accession>
<dbReference type="EMBL" id="AE005674">
    <property type="protein sequence ID" value="AAN44815.1"/>
    <property type="molecule type" value="Genomic_DNA"/>
</dbReference>
<dbReference type="EMBL" id="AE014073">
    <property type="protein sequence ID" value="AAP19361.1"/>
    <property type="molecule type" value="Genomic_DNA"/>
</dbReference>
<dbReference type="RefSeq" id="NP_709108.1">
    <property type="nucleotide sequence ID" value="NC_004337.2"/>
</dbReference>
<dbReference type="RefSeq" id="WP_000579833.1">
    <property type="nucleotide sequence ID" value="NZ_WPGW01000088.1"/>
</dbReference>
<dbReference type="SMR" id="P60447"/>
<dbReference type="STRING" id="198214.SF3352"/>
<dbReference type="PaxDb" id="198214-SF3352"/>
<dbReference type="GeneID" id="1027004"/>
<dbReference type="GeneID" id="86948184"/>
<dbReference type="KEGG" id="sfl:SF3352"/>
<dbReference type="KEGG" id="sfx:S4410"/>
<dbReference type="PATRIC" id="fig|198214.7.peg.3961"/>
<dbReference type="HOGENOM" id="CLU_044142_4_1_6"/>
<dbReference type="Proteomes" id="UP000001006">
    <property type="component" value="Chromosome"/>
</dbReference>
<dbReference type="Proteomes" id="UP000002673">
    <property type="component" value="Chromosome"/>
</dbReference>
<dbReference type="GO" id="GO:0022625">
    <property type="term" value="C:cytosolic large ribosomal subunit"/>
    <property type="evidence" value="ECO:0007669"/>
    <property type="project" value="TreeGrafter"/>
</dbReference>
<dbReference type="GO" id="GO:0019843">
    <property type="term" value="F:rRNA binding"/>
    <property type="evidence" value="ECO:0007669"/>
    <property type="project" value="UniProtKB-UniRule"/>
</dbReference>
<dbReference type="GO" id="GO:0003735">
    <property type="term" value="F:structural constituent of ribosome"/>
    <property type="evidence" value="ECO:0007669"/>
    <property type="project" value="InterPro"/>
</dbReference>
<dbReference type="GO" id="GO:0006412">
    <property type="term" value="P:translation"/>
    <property type="evidence" value="ECO:0007669"/>
    <property type="project" value="UniProtKB-UniRule"/>
</dbReference>
<dbReference type="FunFam" id="2.40.30.10:FF:000004">
    <property type="entry name" value="50S ribosomal protein L3"/>
    <property type="match status" value="1"/>
</dbReference>
<dbReference type="FunFam" id="3.30.160.810:FF:000001">
    <property type="entry name" value="50S ribosomal protein L3"/>
    <property type="match status" value="1"/>
</dbReference>
<dbReference type="Gene3D" id="3.30.160.810">
    <property type="match status" value="1"/>
</dbReference>
<dbReference type="Gene3D" id="2.40.30.10">
    <property type="entry name" value="Translation factors"/>
    <property type="match status" value="1"/>
</dbReference>
<dbReference type="HAMAP" id="MF_01325_B">
    <property type="entry name" value="Ribosomal_uL3_B"/>
    <property type="match status" value="1"/>
</dbReference>
<dbReference type="InterPro" id="IPR000597">
    <property type="entry name" value="Ribosomal_uL3"/>
</dbReference>
<dbReference type="InterPro" id="IPR019927">
    <property type="entry name" value="Ribosomal_uL3_bac/org-type"/>
</dbReference>
<dbReference type="InterPro" id="IPR019926">
    <property type="entry name" value="Ribosomal_uL3_CS"/>
</dbReference>
<dbReference type="InterPro" id="IPR009000">
    <property type="entry name" value="Transl_B-barrel_sf"/>
</dbReference>
<dbReference type="NCBIfam" id="TIGR03625">
    <property type="entry name" value="L3_bact"/>
    <property type="match status" value="1"/>
</dbReference>
<dbReference type="PANTHER" id="PTHR11229">
    <property type="entry name" value="50S RIBOSOMAL PROTEIN L3"/>
    <property type="match status" value="1"/>
</dbReference>
<dbReference type="PANTHER" id="PTHR11229:SF16">
    <property type="entry name" value="LARGE RIBOSOMAL SUBUNIT PROTEIN UL3C"/>
    <property type="match status" value="1"/>
</dbReference>
<dbReference type="Pfam" id="PF00297">
    <property type="entry name" value="Ribosomal_L3"/>
    <property type="match status" value="1"/>
</dbReference>
<dbReference type="SUPFAM" id="SSF50447">
    <property type="entry name" value="Translation proteins"/>
    <property type="match status" value="1"/>
</dbReference>
<dbReference type="PROSITE" id="PS00474">
    <property type="entry name" value="RIBOSOMAL_L3"/>
    <property type="match status" value="1"/>
</dbReference>
<keyword id="KW-0488">Methylation</keyword>
<keyword id="KW-1185">Reference proteome</keyword>
<keyword id="KW-0687">Ribonucleoprotein</keyword>
<keyword id="KW-0689">Ribosomal protein</keyword>
<keyword id="KW-0694">RNA-binding</keyword>
<keyword id="KW-0699">rRNA-binding</keyword>
<comment type="function">
    <text evidence="1">One of the primary rRNA binding proteins, it binds directly near the 3'-end of the 23S rRNA, where it nucleates assembly of the 50S subunit.</text>
</comment>
<comment type="subunit">
    <text evidence="1">Part of the 50S ribosomal subunit. Forms a cluster with proteins L14 and L19.</text>
</comment>
<comment type="PTM">
    <text evidence="1">Methylated by PrmB.</text>
</comment>
<comment type="similarity">
    <text evidence="1">Belongs to the universal ribosomal protein uL3 family.</text>
</comment>
<evidence type="ECO:0000255" key="1">
    <source>
        <dbReference type="HAMAP-Rule" id="MF_01325"/>
    </source>
</evidence>
<evidence type="ECO:0000305" key="2"/>
<reference key="1">
    <citation type="journal article" date="2002" name="Nucleic Acids Res.">
        <title>Genome sequence of Shigella flexneri 2a: insights into pathogenicity through comparison with genomes of Escherichia coli K12 and O157.</title>
        <authorList>
            <person name="Jin Q."/>
            <person name="Yuan Z."/>
            <person name="Xu J."/>
            <person name="Wang Y."/>
            <person name="Shen Y."/>
            <person name="Lu W."/>
            <person name="Wang J."/>
            <person name="Liu H."/>
            <person name="Yang J."/>
            <person name="Yang F."/>
            <person name="Zhang X."/>
            <person name="Zhang J."/>
            <person name="Yang G."/>
            <person name="Wu H."/>
            <person name="Qu D."/>
            <person name="Dong J."/>
            <person name="Sun L."/>
            <person name="Xue Y."/>
            <person name="Zhao A."/>
            <person name="Gao Y."/>
            <person name="Zhu J."/>
            <person name="Kan B."/>
            <person name="Ding K."/>
            <person name="Chen S."/>
            <person name="Cheng H."/>
            <person name="Yao Z."/>
            <person name="He B."/>
            <person name="Chen R."/>
            <person name="Ma D."/>
            <person name="Qiang B."/>
            <person name="Wen Y."/>
            <person name="Hou Y."/>
            <person name="Yu J."/>
        </authorList>
    </citation>
    <scope>NUCLEOTIDE SEQUENCE [LARGE SCALE GENOMIC DNA]</scope>
    <source>
        <strain>301 / Serotype 2a</strain>
    </source>
</reference>
<reference key="2">
    <citation type="journal article" date="2003" name="Infect. Immun.">
        <title>Complete genome sequence and comparative genomics of Shigella flexneri serotype 2a strain 2457T.</title>
        <authorList>
            <person name="Wei J."/>
            <person name="Goldberg M.B."/>
            <person name="Burland V."/>
            <person name="Venkatesan M.M."/>
            <person name="Deng W."/>
            <person name="Fournier G."/>
            <person name="Mayhew G.F."/>
            <person name="Plunkett G. III"/>
            <person name="Rose D.J."/>
            <person name="Darling A."/>
            <person name="Mau B."/>
            <person name="Perna N.T."/>
            <person name="Payne S.M."/>
            <person name="Runyen-Janecky L.J."/>
            <person name="Zhou S."/>
            <person name="Schwartz D.C."/>
            <person name="Blattner F.R."/>
        </authorList>
    </citation>
    <scope>NUCLEOTIDE SEQUENCE [LARGE SCALE GENOMIC DNA]</scope>
    <source>
        <strain>ATCC 700930 / 2457T / Serotype 2a</strain>
    </source>
</reference>
<gene>
    <name evidence="1" type="primary">rplC</name>
    <name type="ordered locus">SF3352</name>
    <name type="ordered locus">S4410</name>
</gene>
<name>RL3_SHIFL</name>
<organism>
    <name type="scientific">Shigella flexneri</name>
    <dbReference type="NCBI Taxonomy" id="623"/>
    <lineage>
        <taxon>Bacteria</taxon>
        <taxon>Pseudomonadati</taxon>
        <taxon>Pseudomonadota</taxon>
        <taxon>Gammaproteobacteria</taxon>
        <taxon>Enterobacterales</taxon>
        <taxon>Enterobacteriaceae</taxon>
        <taxon>Shigella</taxon>
    </lineage>
</organism>
<feature type="chain" id="PRO_0000077151" description="Large ribosomal subunit protein uL3">
    <location>
        <begin position="1"/>
        <end position="209"/>
    </location>
</feature>
<feature type="modified residue" description="N5-methylglutamine" evidence="1">
    <location>
        <position position="150"/>
    </location>
</feature>
<proteinExistence type="inferred from homology"/>